<sequence length="151" mass="16845">MFDVIAFLVQEYRDFSACPGPDDLARKLAAVGFEDDVIHDALDWLSSLLAQGAVPEVLAESRLPRILTQEEREGLPLEVQDFVLFLDRVAAVNNVQREQILDRLMDVPPDERSLDAARLTVLAVLWRHAAEVDALIAEELMVAIDGPMPLQ</sequence>
<accession>C1D687</accession>
<evidence type="ECO:0000255" key="1">
    <source>
        <dbReference type="HAMAP-Rule" id="MF_00598"/>
    </source>
</evidence>
<comment type="similarity">
    <text evidence="1">Belongs to the Smg family.</text>
</comment>
<feature type="chain" id="PRO_1000146997" description="Protein Smg homolog">
    <location>
        <begin position="1"/>
        <end position="151"/>
    </location>
</feature>
<proteinExistence type="inferred from homology"/>
<name>SMG_LARHH</name>
<gene>
    <name evidence="1" type="primary">smg</name>
    <name type="ordered locus">LHK_03144</name>
</gene>
<organism>
    <name type="scientific">Laribacter hongkongensis (strain HLHK9)</name>
    <dbReference type="NCBI Taxonomy" id="557598"/>
    <lineage>
        <taxon>Bacteria</taxon>
        <taxon>Pseudomonadati</taxon>
        <taxon>Pseudomonadota</taxon>
        <taxon>Betaproteobacteria</taxon>
        <taxon>Neisseriales</taxon>
        <taxon>Aquaspirillaceae</taxon>
        <taxon>Laribacter</taxon>
    </lineage>
</organism>
<dbReference type="EMBL" id="CP001154">
    <property type="protein sequence ID" value="ACO76122.1"/>
    <property type="molecule type" value="Genomic_DNA"/>
</dbReference>
<dbReference type="RefSeq" id="WP_012698585.1">
    <property type="nucleotide sequence ID" value="NC_012559.1"/>
</dbReference>
<dbReference type="SMR" id="C1D687"/>
<dbReference type="STRING" id="557598.LHK_03144"/>
<dbReference type="KEGG" id="lhk:LHK_03144"/>
<dbReference type="eggNOG" id="COG2922">
    <property type="taxonomic scope" value="Bacteria"/>
</dbReference>
<dbReference type="HOGENOM" id="CLU_133242_0_0_4"/>
<dbReference type="Proteomes" id="UP000002010">
    <property type="component" value="Chromosome"/>
</dbReference>
<dbReference type="HAMAP" id="MF_00598">
    <property type="entry name" value="Smg"/>
    <property type="match status" value="1"/>
</dbReference>
<dbReference type="InterPro" id="IPR007456">
    <property type="entry name" value="Smg"/>
</dbReference>
<dbReference type="PANTHER" id="PTHR38692">
    <property type="entry name" value="PROTEIN SMG"/>
    <property type="match status" value="1"/>
</dbReference>
<dbReference type="PANTHER" id="PTHR38692:SF1">
    <property type="entry name" value="PROTEIN SMG"/>
    <property type="match status" value="1"/>
</dbReference>
<dbReference type="Pfam" id="PF04361">
    <property type="entry name" value="DUF494"/>
    <property type="match status" value="1"/>
</dbReference>
<reference key="1">
    <citation type="journal article" date="2009" name="PLoS Genet.">
        <title>The complete genome and proteome of Laribacter hongkongensis reveal potential mechanisms for adaptations to different temperatures and habitats.</title>
        <authorList>
            <person name="Woo P.C.Y."/>
            <person name="Lau S.K.P."/>
            <person name="Tse H."/>
            <person name="Teng J.L.L."/>
            <person name="Curreem S.O."/>
            <person name="Tsang A.K.L."/>
            <person name="Fan R.Y.Y."/>
            <person name="Wong G.K.M."/>
            <person name="Huang Y."/>
            <person name="Loman N.J."/>
            <person name="Snyder L.A.S."/>
            <person name="Cai J.J."/>
            <person name="Huang J.-D."/>
            <person name="Mak W."/>
            <person name="Pallen M.J."/>
            <person name="Lok S."/>
            <person name="Yuen K.-Y."/>
        </authorList>
    </citation>
    <scope>NUCLEOTIDE SEQUENCE [LARGE SCALE GENOMIC DNA]</scope>
    <source>
        <strain>HLHK9</strain>
    </source>
</reference>
<keyword id="KW-1185">Reference proteome</keyword>
<protein>
    <recommendedName>
        <fullName evidence="1">Protein Smg homolog</fullName>
    </recommendedName>
</protein>